<organism>
    <name type="scientific">Ostreococcus lucimarinus (strain CCE9901)</name>
    <dbReference type="NCBI Taxonomy" id="436017"/>
    <lineage>
        <taxon>Eukaryota</taxon>
        <taxon>Viridiplantae</taxon>
        <taxon>Chlorophyta</taxon>
        <taxon>Mamiellophyceae</taxon>
        <taxon>Mamiellales</taxon>
        <taxon>Bathycoccaceae</taxon>
        <taxon>Ostreococcus</taxon>
    </lineage>
</organism>
<accession>A4RYD2</accession>
<reference key="1">
    <citation type="journal article" date="2007" name="Proc. Natl. Acad. Sci. U.S.A.">
        <title>The tiny eukaryote Ostreococcus provides genomic insights into the paradox of plankton speciation.</title>
        <authorList>
            <person name="Palenik B."/>
            <person name="Grimwood J."/>
            <person name="Aerts A."/>
            <person name="Rouze P."/>
            <person name="Salamov A."/>
            <person name="Putnam N."/>
            <person name="Dupont C."/>
            <person name="Jorgensen R."/>
            <person name="Derelle E."/>
            <person name="Rombauts S."/>
            <person name="Zhou K."/>
            <person name="Otillar R."/>
            <person name="Merchant S.S."/>
            <person name="Podell S."/>
            <person name="Gaasterland T."/>
            <person name="Napoli C."/>
            <person name="Gendler K."/>
            <person name="Manuell A."/>
            <person name="Tai V."/>
            <person name="Vallon O."/>
            <person name="Piganeau G."/>
            <person name="Jancek S."/>
            <person name="Heijde M."/>
            <person name="Jabbari K."/>
            <person name="Bowler C."/>
            <person name="Lohr M."/>
            <person name="Robbens S."/>
            <person name="Werner G."/>
            <person name="Dubchak I."/>
            <person name="Pazour G.J."/>
            <person name="Ren Q."/>
            <person name="Paulsen I."/>
            <person name="Delwiche C."/>
            <person name="Schmutz J."/>
            <person name="Rokhsar D."/>
            <person name="Van de Peer Y."/>
            <person name="Moreau H."/>
            <person name="Grigoriev I.V."/>
        </authorList>
    </citation>
    <scope>NUCLEOTIDE SEQUENCE [LARGE SCALE GENOMIC DNA]</scope>
    <source>
        <strain>CCE9901</strain>
    </source>
</reference>
<protein>
    <recommendedName>
        <fullName evidence="2">Adenylosuccinate synthetase, chloroplastic</fullName>
        <shortName evidence="2">AMPSase</shortName>
        <shortName evidence="2">AdSS</shortName>
        <ecNumber evidence="2">6.3.4.4</ecNumber>
    </recommendedName>
    <alternativeName>
        <fullName evidence="2">IMP--aspartate ligase</fullName>
    </alternativeName>
</protein>
<sequence>MRGREDANARVLGSQWGDEGKGKLVDILAREYDVVARCQGGANAGHTIYDDDGKKYALHLVPSGILNENATCVVGNGVVVHLPGMFDEIDALLKAGVDARGRMMVSDRAHLLFDLHKEIDGLREAELSGNKIGTTKRGIGPAYASKATRNGVRLGDIRDADKFANALRTLAADAAARFDGFEYDVEAEIVRYREIASRIEPFIADTVEYVNDAHRNGKKILVEGANATMLDLDFGTYPFVTSSNPAIGGVSNGLGLAPRKFETIIGVAKAYTTRVGAGPYPTELFGDVADKLRELGYEYGTTTGRPRRIGWLDMVALNYANQINGFTHLNITKLDVLSEMDELKIGVAYELPNGKTTTAFPADIATLENVKVVYETLPGWKTDIANVRSWDDMPENAKKYILRCEELSGVECRYIGVGPGRDAMVIKP</sequence>
<name>PURA_OSTLU</name>
<dbReference type="EC" id="6.3.4.4" evidence="2"/>
<dbReference type="EMBL" id="CP000586">
    <property type="protein sequence ID" value="ABO96441.1"/>
    <property type="molecule type" value="Genomic_DNA"/>
</dbReference>
<dbReference type="RefSeq" id="XP_001418148.1">
    <property type="nucleotide sequence ID" value="XM_001418111.1"/>
</dbReference>
<dbReference type="SMR" id="A4RYD2"/>
<dbReference type="STRING" id="436017.A4RYD2"/>
<dbReference type="EnsemblPlants" id="ABO96441">
    <property type="protein sequence ID" value="ABO96441"/>
    <property type="gene ID" value="OSTLU_19549"/>
</dbReference>
<dbReference type="GeneID" id="5002244"/>
<dbReference type="Gramene" id="ABO96441">
    <property type="protein sequence ID" value="ABO96441"/>
    <property type="gene ID" value="OSTLU_19549"/>
</dbReference>
<dbReference type="KEGG" id="olu:OSTLU_19549"/>
<dbReference type="eggNOG" id="KOG1355">
    <property type="taxonomic scope" value="Eukaryota"/>
</dbReference>
<dbReference type="HOGENOM" id="CLU_029848_0_0_1"/>
<dbReference type="OMA" id="FHHAKPI"/>
<dbReference type="OrthoDB" id="10265645at2759"/>
<dbReference type="UniPathway" id="UPA00075">
    <property type="reaction ID" value="UER00335"/>
</dbReference>
<dbReference type="Proteomes" id="UP000001568">
    <property type="component" value="Chromosome 6"/>
</dbReference>
<dbReference type="GO" id="GO:0009507">
    <property type="term" value="C:chloroplast"/>
    <property type="evidence" value="ECO:0007669"/>
    <property type="project" value="UniProtKB-SubCell"/>
</dbReference>
<dbReference type="GO" id="GO:0004019">
    <property type="term" value="F:adenylosuccinate synthase activity"/>
    <property type="evidence" value="ECO:0007669"/>
    <property type="project" value="UniProtKB-UniRule"/>
</dbReference>
<dbReference type="GO" id="GO:0005525">
    <property type="term" value="F:GTP binding"/>
    <property type="evidence" value="ECO:0007669"/>
    <property type="project" value="UniProtKB-UniRule"/>
</dbReference>
<dbReference type="GO" id="GO:0000287">
    <property type="term" value="F:magnesium ion binding"/>
    <property type="evidence" value="ECO:0007669"/>
    <property type="project" value="UniProtKB-UniRule"/>
</dbReference>
<dbReference type="GO" id="GO:0044208">
    <property type="term" value="P:'de novo' AMP biosynthetic process"/>
    <property type="evidence" value="ECO:0007669"/>
    <property type="project" value="UniProtKB-UniRule"/>
</dbReference>
<dbReference type="GO" id="GO:0046040">
    <property type="term" value="P:IMP metabolic process"/>
    <property type="evidence" value="ECO:0007669"/>
    <property type="project" value="TreeGrafter"/>
</dbReference>
<dbReference type="CDD" id="cd03108">
    <property type="entry name" value="AdSS"/>
    <property type="match status" value="1"/>
</dbReference>
<dbReference type="FunFam" id="3.90.170.10:FF:000001">
    <property type="entry name" value="Adenylosuccinate synthetase"/>
    <property type="match status" value="1"/>
</dbReference>
<dbReference type="FunFam" id="1.10.300.10:FF:000002">
    <property type="entry name" value="Adenylosuccinate synthetase, chloroplastic"/>
    <property type="match status" value="1"/>
</dbReference>
<dbReference type="Gene3D" id="3.40.440.10">
    <property type="entry name" value="Adenylosuccinate Synthetase, subunit A, domain 1"/>
    <property type="match status" value="1"/>
</dbReference>
<dbReference type="Gene3D" id="1.10.300.10">
    <property type="entry name" value="Adenylosuccinate Synthetase, subunit A, domain 2"/>
    <property type="match status" value="1"/>
</dbReference>
<dbReference type="Gene3D" id="3.90.170.10">
    <property type="entry name" value="Adenylosuccinate Synthetase, subunit A, domain 3"/>
    <property type="match status" value="1"/>
</dbReference>
<dbReference type="HAMAP" id="MF_00011">
    <property type="entry name" value="Adenylosucc_synth"/>
    <property type="match status" value="1"/>
</dbReference>
<dbReference type="InterPro" id="IPR018220">
    <property type="entry name" value="Adenylosuccin_syn_GTP-bd"/>
</dbReference>
<dbReference type="InterPro" id="IPR033128">
    <property type="entry name" value="Adenylosuccin_syn_Lys_AS"/>
</dbReference>
<dbReference type="InterPro" id="IPR042109">
    <property type="entry name" value="Adenylosuccinate_synth_dom1"/>
</dbReference>
<dbReference type="InterPro" id="IPR042110">
    <property type="entry name" value="Adenylosuccinate_synth_dom2"/>
</dbReference>
<dbReference type="InterPro" id="IPR042111">
    <property type="entry name" value="Adenylosuccinate_synth_dom3"/>
</dbReference>
<dbReference type="InterPro" id="IPR001114">
    <property type="entry name" value="Adenylosuccinate_synthetase"/>
</dbReference>
<dbReference type="InterPro" id="IPR027417">
    <property type="entry name" value="P-loop_NTPase"/>
</dbReference>
<dbReference type="NCBIfam" id="NF002223">
    <property type="entry name" value="PRK01117.1"/>
    <property type="match status" value="1"/>
</dbReference>
<dbReference type="NCBIfam" id="TIGR00184">
    <property type="entry name" value="purA"/>
    <property type="match status" value="1"/>
</dbReference>
<dbReference type="PANTHER" id="PTHR11846">
    <property type="entry name" value="ADENYLOSUCCINATE SYNTHETASE"/>
    <property type="match status" value="1"/>
</dbReference>
<dbReference type="PANTHER" id="PTHR11846:SF0">
    <property type="entry name" value="ADENYLOSUCCINATE SYNTHETASE"/>
    <property type="match status" value="1"/>
</dbReference>
<dbReference type="Pfam" id="PF00709">
    <property type="entry name" value="Adenylsucc_synt"/>
    <property type="match status" value="1"/>
</dbReference>
<dbReference type="SMART" id="SM00788">
    <property type="entry name" value="Adenylsucc_synt"/>
    <property type="match status" value="1"/>
</dbReference>
<dbReference type="SUPFAM" id="SSF52540">
    <property type="entry name" value="P-loop containing nucleoside triphosphate hydrolases"/>
    <property type="match status" value="1"/>
</dbReference>
<dbReference type="PROSITE" id="PS01266">
    <property type="entry name" value="ADENYLOSUCCIN_SYN_1"/>
    <property type="match status" value="1"/>
</dbReference>
<dbReference type="PROSITE" id="PS00513">
    <property type="entry name" value="ADENYLOSUCCIN_SYN_2"/>
    <property type="match status" value="1"/>
</dbReference>
<gene>
    <name evidence="2" type="primary">PURA</name>
    <name type="ORF">OSTLU_19549</name>
</gene>
<feature type="chain" id="PRO_0000399279" description="Adenylosuccinate synthetase, chloroplastic">
    <location>
        <begin position="1"/>
        <end position="428"/>
    </location>
</feature>
<feature type="active site" description="Proton acceptor" evidence="2">
    <location>
        <position position="18"/>
    </location>
</feature>
<feature type="active site" description="Proton donor" evidence="2">
    <location>
        <position position="46"/>
    </location>
</feature>
<feature type="binding site" evidence="2">
    <location>
        <begin position="17"/>
        <end position="23"/>
    </location>
    <ligand>
        <name>GTP</name>
        <dbReference type="ChEBI" id="CHEBI:37565"/>
    </ligand>
</feature>
<feature type="binding site" description="in other chain" evidence="2">
    <location>
        <begin position="18"/>
        <end position="21"/>
    </location>
    <ligand>
        <name>IMP</name>
        <dbReference type="ChEBI" id="CHEBI:58053"/>
        <note>ligand shared between dimeric partners</note>
    </ligand>
</feature>
<feature type="binding site" evidence="2">
    <location>
        <position position="18"/>
    </location>
    <ligand>
        <name>Mg(2+)</name>
        <dbReference type="ChEBI" id="CHEBI:18420"/>
    </ligand>
</feature>
<feature type="binding site" description="in other chain" evidence="2">
    <location>
        <begin position="43"/>
        <end position="46"/>
    </location>
    <ligand>
        <name>IMP</name>
        <dbReference type="ChEBI" id="CHEBI:58053"/>
        <note>ligand shared between dimeric partners</note>
    </ligand>
</feature>
<feature type="binding site" evidence="2">
    <location>
        <begin position="45"/>
        <end position="47"/>
    </location>
    <ligand>
        <name>GTP</name>
        <dbReference type="ChEBI" id="CHEBI:37565"/>
    </ligand>
</feature>
<feature type="binding site" evidence="2">
    <location>
        <position position="45"/>
    </location>
    <ligand>
        <name>Mg(2+)</name>
        <dbReference type="ChEBI" id="CHEBI:18420"/>
    </ligand>
</feature>
<feature type="binding site" description="in other chain" evidence="2">
    <location>
        <position position="135"/>
    </location>
    <ligand>
        <name>IMP</name>
        <dbReference type="ChEBI" id="CHEBI:58053"/>
        <note>ligand shared between dimeric partners</note>
    </ligand>
</feature>
<feature type="binding site" evidence="2">
    <location>
        <position position="149"/>
    </location>
    <ligand>
        <name>IMP</name>
        <dbReference type="ChEBI" id="CHEBI:58053"/>
        <note>ligand shared between dimeric partners</note>
    </ligand>
</feature>
<feature type="binding site" description="in other chain" evidence="2">
    <location>
        <position position="226"/>
    </location>
    <ligand>
        <name>IMP</name>
        <dbReference type="ChEBI" id="CHEBI:58053"/>
        <note>ligand shared between dimeric partners</note>
    </ligand>
</feature>
<feature type="binding site" description="in other chain" evidence="2">
    <location>
        <position position="241"/>
    </location>
    <ligand>
        <name>IMP</name>
        <dbReference type="ChEBI" id="CHEBI:58053"/>
        <note>ligand shared between dimeric partners</note>
    </ligand>
</feature>
<feature type="binding site" evidence="2">
    <location>
        <begin position="301"/>
        <end position="307"/>
    </location>
    <ligand>
        <name>substrate</name>
    </ligand>
</feature>
<feature type="binding site" description="in other chain" evidence="2">
    <location>
        <position position="305"/>
    </location>
    <ligand>
        <name>IMP</name>
        <dbReference type="ChEBI" id="CHEBI:58053"/>
        <note>ligand shared between dimeric partners</note>
    </ligand>
</feature>
<feature type="binding site" evidence="2">
    <location>
        <position position="307"/>
    </location>
    <ligand>
        <name>GTP</name>
        <dbReference type="ChEBI" id="CHEBI:37565"/>
    </ligand>
</feature>
<feature type="binding site" evidence="2">
    <location>
        <begin position="333"/>
        <end position="335"/>
    </location>
    <ligand>
        <name>GTP</name>
        <dbReference type="ChEBI" id="CHEBI:37565"/>
    </ligand>
</feature>
<feature type="binding site" evidence="2">
    <location>
        <begin position="416"/>
        <end position="418"/>
    </location>
    <ligand>
        <name>GTP</name>
        <dbReference type="ChEBI" id="CHEBI:37565"/>
    </ligand>
</feature>
<evidence type="ECO:0000250" key="1"/>
<evidence type="ECO:0000255" key="2">
    <source>
        <dbReference type="HAMAP-Rule" id="MF_03125"/>
    </source>
</evidence>
<comment type="function">
    <text evidence="1">Plays an important role in the de novo pathway and in the salvage pathway of purine nucleotide biosynthesis. Catalyzes the first committed step in the biosynthesis of AMP from IMP (By similarity).</text>
</comment>
<comment type="catalytic activity">
    <reaction evidence="2">
        <text>IMP + L-aspartate + GTP = N(6)-(1,2-dicarboxyethyl)-AMP + GDP + phosphate + 2 H(+)</text>
        <dbReference type="Rhea" id="RHEA:15753"/>
        <dbReference type="ChEBI" id="CHEBI:15378"/>
        <dbReference type="ChEBI" id="CHEBI:29991"/>
        <dbReference type="ChEBI" id="CHEBI:37565"/>
        <dbReference type="ChEBI" id="CHEBI:43474"/>
        <dbReference type="ChEBI" id="CHEBI:57567"/>
        <dbReference type="ChEBI" id="CHEBI:58053"/>
        <dbReference type="ChEBI" id="CHEBI:58189"/>
        <dbReference type="EC" id="6.3.4.4"/>
    </reaction>
</comment>
<comment type="cofactor">
    <cofactor evidence="2">
        <name>Mg(2+)</name>
        <dbReference type="ChEBI" id="CHEBI:18420"/>
    </cofactor>
    <text evidence="2">Binds 1 Mg(2+) ion per subunit.</text>
</comment>
<comment type="pathway">
    <text evidence="2">Purine metabolism; AMP biosynthesis via de novo pathway; AMP from IMP: step 1/2.</text>
</comment>
<comment type="subunit">
    <text evidence="2">Homodimer.</text>
</comment>
<comment type="subcellular location">
    <subcellularLocation>
        <location evidence="2">Plastid</location>
        <location evidence="2">Chloroplast</location>
    </subcellularLocation>
</comment>
<comment type="miscellaneous">
    <text evidence="2">This protein may be expected to contain an N-terminal transit peptide but none has been predicted.</text>
</comment>
<comment type="similarity">
    <text evidence="2">Belongs to the adenylosuccinate synthetase family.</text>
</comment>
<keyword id="KW-0150">Chloroplast</keyword>
<keyword id="KW-0342">GTP-binding</keyword>
<keyword id="KW-0436">Ligase</keyword>
<keyword id="KW-0460">Magnesium</keyword>
<keyword id="KW-0479">Metal-binding</keyword>
<keyword id="KW-0547">Nucleotide-binding</keyword>
<keyword id="KW-0934">Plastid</keyword>
<keyword id="KW-0658">Purine biosynthesis</keyword>
<keyword id="KW-1185">Reference proteome</keyword>
<proteinExistence type="inferred from homology"/>